<feature type="chain" id="PRO_0000374329" description="tRNA-2-methylthio-N(6)-dimethylallyladenosine synthase">
    <location>
        <begin position="1"/>
        <end position="474"/>
    </location>
</feature>
<feature type="domain" description="MTTase N-terminal" evidence="1">
    <location>
        <begin position="3"/>
        <end position="120"/>
    </location>
</feature>
<feature type="domain" description="Radical SAM core" evidence="2">
    <location>
        <begin position="143"/>
        <end position="375"/>
    </location>
</feature>
<feature type="domain" description="TRAM" evidence="1">
    <location>
        <begin position="378"/>
        <end position="441"/>
    </location>
</feature>
<feature type="binding site" evidence="1">
    <location>
        <position position="12"/>
    </location>
    <ligand>
        <name>[4Fe-4S] cluster</name>
        <dbReference type="ChEBI" id="CHEBI:49883"/>
        <label>1</label>
    </ligand>
</feature>
<feature type="binding site" evidence="1">
    <location>
        <position position="49"/>
    </location>
    <ligand>
        <name>[4Fe-4S] cluster</name>
        <dbReference type="ChEBI" id="CHEBI:49883"/>
        <label>1</label>
    </ligand>
</feature>
<feature type="binding site" evidence="1">
    <location>
        <position position="83"/>
    </location>
    <ligand>
        <name>[4Fe-4S] cluster</name>
        <dbReference type="ChEBI" id="CHEBI:49883"/>
        <label>1</label>
    </ligand>
</feature>
<feature type="binding site" evidence="1">
    <location>
        <position position="157"/>
    </location>
    <ligand>
        <name>[4Fe-4S] cluster</name>
        <dbReference type="ChEBI" id="CHEBI:49883"/>
        <label>2</label>
        <note>4Fe-4S-S-AdoMet</note>
    </ligand>
</feature>
<feature type="binding site" evidence="1">
    <location>
        <position position="161"/>
    </location>
    <ligand>
        <name>[4Fe-4S] cluster</name>
        <dbReference type="ChEBI" id="CHEBI:49883"/>
        <label>2</label>
        <note>4Fe-4S-S-AdoMet</note>
    </ligand>
</feature>
<feature type="binding site" evidence="1">
    <location>
        <position position="164"/>
    </location>
    <ligand>
        <name>[4Fe-4S] cluster</name>
        <dbReference type="ChEBI" id="CHEBI:49883"/>
        <label>2</label>
        <note>4Fe-4S-S-AdoMet</note>
    </ligand>
</feature>
<reference key="1">
    <citation type="journal article" date="2007" name="Genome Biol.">
        <title>Characterization and modeling of the Haemophilus influenzae core and supragenomes based on the complete genomic sequences of Rd and 12 clinical nontypeable strains.</title>
        <authorList>
            <person name="Hogg J.S."/>
            <person name="Hu F.Z."/>
            <person name="Janto B."/>
            <person name="Boissy R."/>
            <person name="Hayes J."/>
            <person name="Keefe R."/>
            <person name="Post J.C."/>
            <person name="Ehrlich G.D."/>
        </authorList>
    </citation>
    <scope>NUCLEOTIDE SEQUENCE [LARGE SCALE GENOMIC DNA]</scope>
    <source>
        <strain>PittEE</strain>
    </source>
</reference>
<name>MIAB_HAEIE</name>
<evidence type="ECO:0000255" key="1">
    <source>
        <dbReference type="HAMAP-Rule" id="MF_01864"/>
    </source>
</evidence>
<evidence type="ECO:0000255" key="2">
    <source>
        <dbReference type="PROSITE-ProRule" id="PRU01266"/>
    </source>
</evidence>
<sequence length="474" mass="53625">MTQKLHIKTWGCQMNEYDSSKMADLLLSTHGLELTEAPEEADVLLLNTCSIREKAQEKVFHQLGRWKELKKNNPNLVIGVGGCVASQEGEHIRHRAPYVDIIFGPQTLHRLPEMINQIRGGKSSVVDVSFPEIEKFDRLPEPRAEGPTAFVSIMEGCNKYCTFCVVPYTRGEEVSRPVDDVLFEIAQLAEQGVREVNLLGQNVNAYRGPTHDGQICSFAELLRLVASIDGIDRLRFTTSHPIEFTNDIIDVYRDTPELVSFLHLPVQAGSDRVLTMMKRGHTALEYKSIIRKLRAVRPDIQISSDFIVGFPGETAEDFEQTMNLIAQVNFDMSFSFVYSARPGTPAADMPDDVTEDEKKQRLYVLQERINQQAAQFSRRMLGTEQRVLVEGPSKKDIMELTGRTETNRIVNFQGSPEMIGKFVDVKITDVYTNSLRGEVVRTEDEMGLRIAQSPQEVMNRTRKEDELGVGRYHG</sequence>
<accession>A5UBB9</accession>
<organism>
    <name type="scientific">Haemophilus influenzae (strain PittEE)</name>
    <dbReference type="NCBI Taxonomy" id="374930"/>
    <lineage>
        <taxon>Bacteria</taxon>
        <taxon>Pseudomonadati</taxon>
        <taxon>Pseudomonadota</taxon>
        <taxon>Gammaproteobacteria</taxon>
        <taxon>Pasteurellales</taxon>
        <taxon>Pasteurellaceae</taxon>
        <taxon>Haemophilus</taxon>
    </lineage>
</organism>
<keyword id="KW-0004">4Fe-4S</keyword>
<keyword id="KW-0963">Cytoplasm</keyword>
<keyword id="KW-0408">Iron</keyword>
<keyword id="KW-0411">Iron-sulfur</keyword>
<keyword id="KW-0479">Metal-binding</keyword>
<keyword id="KW-0949">S-adenosyl-L-methionine</keyword>
<keyword id="KW-0808">Transferase</keyword>
<keyword id="KW-0819">tRNA processing</keyword>
<protein>
    <recommendedName>
        <fullName evidence="1">tRNA-2-methylthio-N(6)-dimethylallyladenosine synthase</fullName>
        <ecNumber evidence="1">2.8.4.3</ecNumber>
    </recommendedName>
    <alternativeName>
        <fullName evidence="1">(Dimethylallyl)adenosine tRNA methylthiotransferase MiaB</fullName>
    </alternativeName>
    <alternativeName>
        <fullName evidence="1">tRNA-i(6)A37 methylthiotransferase</fullName>
    </alternativeName>
</protein>
<dbReference type="EC" id="2.8.4.3" evidence="1"/>
<dbReference type="EMBL" id="CP000671">
    <property type="protein sequence ID" value="ABQ98070.1"/>
    <property type="molecule type" value="Genomic_DNA"/>
</dbReference>
<dbReference type="SMR" id="A5UBB9"/>
<dbReference type="KEGG" id="hip:CGSHiEE_03215"/>
<dbReference type="HOGENOM" id="CLU_018697_2_0_6"/>
<dbReference type="GO" id="GO:0005829">
    <property type="term" value="C:cytosol"/>
    <property type="evidence" value="ECO:0007669"/>
    <property type="project" value="TreeGrafter"/>
</dbReference>
<dbReference type="GO" id="GO:0051539">
    <property type="term" value="F:4 iron, 4 sulfur cluster binding"/>
    <property type="evidence" value="ECO:0007669"/>
    <property type="project" value="UniProtKB-UniRule"/>
</dbReference>
<dbReference type="GO" id="GO:0046872">
    <property type="term" value="F:metal ion binding"/>
    <property type="evidence" value="ECO:0007669"/>
    <property type="project" value="UniProtKB-KW"/>
</dbReference>
<dbReference type="GO" id="GO:0035597">
    <property type="term" value="F:N6-isopentenyladenosine methylthiotransferase activity"/>
    <property type="evidence" value="ECO:0007669"/>
    <property type="project" value="TreeGrafter"/>
</dbReference>
<dbReference type="CDD" id="cd01335">
    <property type="entry name" value="Radical_SAM"/>
    <property type="match status" value="1"/>
</dbReference>
<dbReference type="FunFam" id="3.40.50.12160:FF:000001">
    <property type="entry name" value="tRNA-2-methylthio-N(6)-dimethylallyladenosine synthase"/>
    <property type="match status" value="1"/>
</dbReference>
<dbReference type="FunFam" id="3.80.30.20:FF:000001">
    <property type="entry name" value="tRNA-2-methylthio-N(6)-dimethylallyladenosine synthase 2"/>
    <property type="match status" value="1"/>
</dbReference>
<dbReference type="Gene3D" id="3.40.50.12160">
    <property type="entry name" value="Methylthiotransferase, N-terminal domain"/>
    <property type="match status" value="1"/>
</dbReference>
<dbReference type="Gene3D" id="3.80.30.20">
    <property type="entry name" value="tm_1862 like domain"/>
    <property type="match status" value="1"/>
</dbReference>
<dbReference type="HAMAP" id="MF_01864">
    <property type="entry name" value="tRNA_metthiotr_MiaB"/>
    <property type="match status" value="1"/>
</dbReference>
<dbReference type="InterPro" id="IPR006638">
    <property type="entry name" value="Elp3/MiaA/NifB-like_rSAM"/>
</dbReference>
<dbReference type="InterPro" id="IPR005839">
    <property type="entry name" value="Methylthiotransferase"/>
</dbReference>
<dbReference type="InterPro" id="IPR020612">
    <property type="entry name" value="Methylthiotransferase_CS"/>
</dbReference>
<dbReference type="InterPro" id="IPR013848">
    <property type="entry name" value="Methylthiotransferase_N"/>
</dbReference>
<dbReference type="InterPro" id="IPR038135">
    <property type="entry name" value="Methylthiotransferase_N_sf"/>
</dbReference>
<dbReference type="InterPro" id="IPR006463">
    <property type="entry name" value="MiaB_methiolase"/>
</dbReference>
<dbReference type="InterPro" id="IPR007197">
    <property type="entry name" value="rSAM"/>
</dbReference>
<dbReference type="InterPro" id="IPR023404">
    <property type="entry name" value="rSAM_horseshoe"/>
</dbReference>
<dbReference type="InterPro" id="IPR002792">
    <property type="entry name" value="TRAM_dom"/>
</dbReference>
<dbReference type="NCBIfam" id="TIGR01574">
    <property type="entry name" value="miaB-methiolase"/>
    <property type="match status" value="1"/>
</dbReference>
<dbReference type="NCBIfam" id="TIGR00089">
    <property type="entry name" value="MiaB/RimO family radical SAM methylthiotransferase"/>
    <property type="match status" value="1"/>
</dbReference>
<dbReference type="PANTHER" id="PTHR43020">
    <property type="entry name" value="CDK5 REGULATORY SUBUNIT-ASSOCIATED PROTEIN 1"/>
    <property type="match status" value="1"/>
</dbReference>
<dbReference type="PANTHER" id="PTHR43020:SF2">
    <property type="entry name" value="MITOCHONDRIAL TRNA METHYLTHIOTRANSFERASE CDK5RAP1"/>
    <property type="match status" value="1"/>
</dbReference>
<dbReference type="Pfam" id="PF04055">
    <property type="entry name" value="Radical_SAM"/>
    <property type="match status" value="1"/>
</dbReference>
<dbReference type="Pfam" id="PF01938">
    <property type="entry name" value="TRAM"/>
    <property type="match status" value="1"/>
</dbReference>
<dbReference type="Pfam" id="PF00919">
    <property type="entry name" value="UPF0004"/>
    <property type="match status" value="1"/>
</dbReference>
<dbReference type="SFLD" id="SFLDF00273">
    <property type="entry name" value="(dimethylallyl)adenosine_tRNA"/>
    <property type="match status" value="1"/>
</dbReference>
<dbReference type="SFLD" id="SFLDG01082">
    <property type="entry name" value="B12-binding_domain_containing"/>
    <property type="match status" value="1"/>
</dbReference>
<dbReference type="SFLD" id="SFLDS00029">
    <property type="entry name" value="Radical_SAM"/>
    <property type="match status" value="1"/>
</dbReference>
<dbReference type="SMART" id="SM00729">
    <property type="entry name" value="Elp3"/>
    <property type="match status" value="1"/>
</dbReference>
<dbReference type="SUPFAM" id="SSF102114">
    <property type="entry name" value="Radical SAM enzymes"/>
    <property type="match status" value="1"/>
</dbReference>
<dbReference type="PROSITE" id="PS51449">
    <property type="entry name" value="MTTASE_N"/>
    <property type="match status" value="1"/>
</dbReference>
<dbReference type="PROSITE" id="PS01278">
    <property type="entry name" value="MTTASE_RADICAL"/>
    <property type="match status" value="1"/>
</dbReference>
<dbReference type="PROSITE" id="PS51918">
    <property type="entry name" value="RADICAL_SAM"/>
    <property type="match status" value="1"/>
</dbReference>
<dbReference type="PROSITE" id="PS50926">
    <property type="entry name" value="TRAM"/>
    <property type="match status" value="1"/>
</dbReference>
<gene>
    <name evidence="1" type="primary">miaB</name>
    <name type="ordered locus">CGSHiEE_03215</name>
</gene>
<comment type="function">
    <text evidence="1">Catalyzes the methylthiolation of N6-(dimethylallyl)adenosine (i(6)A), leading to the formation of 2-methylthio-N6-(dimethylallyl)adenosine (ms(2)i(6)A) at position 37 in tRNAs that read codons beginning with uridine.</text>
</comment>
<comment type="catalytic activity">
    <reaction evidence="1">
        <text>N(6)-dimethylallyladenosine(37) in tRNA + (sulfur carrier)-SH + AH2 + 2 S-adenosyl-L-methionine = 2-methylsulfanyl-N(6)-dimethylallyladenosine(37) in tRNA + (sulfur carrier)-H + 5'-deoxyadenosine + L-methionine + A + S-adenosyl-L-homocysteine + 2 H(+)</text>
        <dbReference type="Rhea" id="RHEA:37067"/>
        <dbReference type="Rhea" id="RHEA-COMP:10375"/>
        <dbReference type="Rhea" id="RHEA-COMP:10376"/>
        <dbReference type="Rhea" id="RHEA-COMP:14737"/>
        <dbReference type="Rhea" id="RHEA-COMP:14739"/>
        <dbReference type="ChEBI" id="CHEBI:13193"/>
        <dbReference type="ChEBI" id="CHEBI:15378"/>
        <dbReference type="ChEBI" id="CHEBI:17319"/>
        <dbReference type="ChEBI" id="CHEBI:17499"/>
        <dbReference type="ChEBI" id="CHEBI:29917"/>
        <dbReference type="ChEBI" id="CHEBI:57844"/>
        <dbReference type="ChEBI" id="CHEBI:57856"/>
        <dbReference type="ChEBI" id="CHEBI:59789"/>
        <dbReference type="ChEBI" id="CHEBI:64428"/>
        <dbReference type="ChEBI" id="CHEBI:74415"/>
        <dbReference type="ChEBI" id="CHEBI:74417"/>
        <dbReference type="EC" id="2.8.4.3"/>
    </reaction>
</comment>
<comment type="cofactor">
    <cofactor evidence="1">
        <name>[4Fe-4S] cluster</name>
        <dbReference type="ChEBI" id="CHEBI:49883"/>
    </cofactor>
    <text evidence="1">Binds 2 [4Fe-4S] clusters. One cluster is coordinated with 3 cysteines and an exchangeable S-adenosyl-L-methionine.</text>
</comment>
<comment type="subunit">
    <text evidence="1">Monomer.</text>
</comment>
<comment type="subcellular location">
    <subcellularLocation>
        <location evidence="1">Cytoplasm</location>
    </subcellularLocation>
</comment>
<comment type="similarity">
    <text evidence="1">Belongs to the methylthiotransferase family. MiaB subfamily.</text>
</comment>
<proteinExistence type="inferred from homology"/>